<proteinExistence type="inferred from homology"/>
<accession>C4K789</accession>
<reference key="1">
    <citation type="journal article" date="2009" name="Proc. Natl. Acad. Sci. U.S.A.">
        <title>Hamiltonella defensa, genome evolution of protective bacterial endosymbiont from pathogenic ancestors.</title>
        <authorList>
            <person name="Degnan P.H."/>
            <person name="Yu Y."/>
            <person name="Sisneros N."/>
            <person name="Wing R.A."/>
            <person name="Moran N.A."/>
        </authorList>
    </citation>
    <scope>NUCLEOTIDE SEQUENCE [LARGE SCALE GENOMIC DNA]</scope>
    <source>
        <strain>5AT</strain>
    </source>
</reference>
<organism>
    <name type="scientific">Hamiltonella defensa subsp. Acyrthosiphon pisum (strain 5AT)</name>
    <dbReference type="NCBI Taxonomy" id="572265"/>
    <lineage>
        <taxon>Bacteria</taxon>
        <taxon>Pseudomonadati</taxon>
        <taxon>Pseudomonadota</taxon>
        <taxon>Gammaproteobacteria</taxon>
        <taxon>Enterobacterales</taxon>
        <taxon>Enterobacteriaceae</taxon>
        <taxon>aphid secondary symbionts</taxon>
        <taxon>Candidatus Hamiltonella</taxon>
    </lineage>
</organism>
<name>PUR7_HAMD5</name>
<keyword id="KW-0067">ATP-binding</keyword>
<keyword id="KW-0436">Ligase</keyword>
<keyword id="KW-0547">Nucleotide-binding</keyword>
<keyword id="KW-0658">Purine biosynthesis</keyword>
<dbReference type="EC" id="6.3.2.6" evidence="1"/>
<dbReference type="EMBL" id="CP001277">
    <property type="protein sequence ID" value="ACQ68432.1"/>
    <property type="molecule type" value="Genomic_DNA"/>
</dbReference>
<dbReference type="RefSeq" id="WP_015874196.1">
    <property type="nucleotide sequence ID" value="NC_012751.1"/>
</dbReference>
<dbReference type="SMR" id="C4K789"/>
<dbReference type="STRING" id="572265.HDEF_1837"/>
<dbReference type="GeneID" id="66261423"/>
<dbReference type="KEGG" id="hde:HDEF_1837"/>
<dbReference type="eggNOG" id="COG0152">
    <property type="taxonomic scope" value="Bacteria"/>
</dbReference>
<dbReference type="HOGENOM" id="CLU_061495_2_1_6"/>
<dbReference type="UniPathway" id="UPA00074">
    <property type="reaction ID" value="UER00131"/>
</dbReference>
<dbReference type="Proteomes" id="UP000002334">
    <property type="component" value="Chromosome"/>
</dbReference>
<dbReference type="GO" id="GO:0005829">
    <property type="term" value="C:cytosol"/>
    <property type="evidence" value="ECO:0007669"/>
    <property type="project" value="TreeGrafter"/>
</dbReference>
<dbReference type="GO" id="GO:0005524">
    <property type="term" value="F:ATP binding"/>
    <property type="evidence" value="ECO:0007669"/>
    <property type="project" value="UniProtKB-KW"/>
</dbReference>
<dbReference type="GO" id="GO:0004639">
    <property type="term" value="F:phosphoribosylaminoimidazolesuccinocarboxamide synthase activity"/>
    <property type="evidence" value="ECO:0007669"/>
    <property type="project" value="UniProtKB-UniRule"/>
</dbReference>
<dbReference type="GO" id="GO:0006189">
    <property type="term" value="P:'de novo' IMP biosynthetic process"/>
    <property type="evidence" value="ECO:0007669"/>
    <property type="project" value="UniProtKB-UniRule"/>
</dbReference>
<dbReference type="GO" id="GO:0009236">
    <property type="term" value="P:cobalamin biosynthetic process"/>
    <property type="evidence" value="ECO:0007669"/>
    <property type="project" value="InterPro"/>
</dbReference>
<dbReference type="CDD" id="cd01415">
    <property type="entry name" value="SAICAR_synt_PurC"/>
    <property type="match status" value="1"/>
</dbReference>
<dbReference type="FunFam" id="3.30.200.20:FF:000086">
    <property type="entry name" value="Phosphoribosylaminoimidazole-succinocarboxamide synthase"/>
    <property type="match status" value="1"/>
</dbReference>
<dbReference type="FunFam" id="3.30.470.20:FF:000006">
    <property type="entry name" value="Phosphoribosylaminoimidazole-succinocarboxamide synthase"/>
    <property type="match status" value="1"/>
</dbReference>
<dbReference type="Gene3D" id="3.30.470.20">
    <property type="entry name" value="ATP-grasp fold, B domain"/>
    <property type="match status" value="1"/>
</dbReference>
<dbReference type="Gene3D" id="3.30.200.20">
    <property type="entry name" value="Phosphorylase Kinase, domain 1"/>
    <property type="match status" value="1"/>
</dbReference>
<dbReference type="HAMAP" id="MF_00137">
    <property type="entry name" value="SAICAR_synth"/>
    <property type="match status" value="1"/>
</dbReference>
<dbReference type="InterPro" id="IPR028923">
    <property type="entry name" value="SAICAR_synt/ADE2_N"/>
</dbReference>
<dbReference type="InterPro" id="IPR033934">
    <property type="entry name" value="SAICAR_synt_PurC"/>
</dbReference>
<dbReference type="InterPro" id="IPR001636">
    <property type="entry name" value="SAICAR_synth"/>
</dbReference>
<dbReference type="InterPro" id="IPR050089">
    <property type="entry name" value="SAICAR_synthetase"/>
</dbReference>
<dbReference type="InterPro" id="IPR018236">
    <property type="entry name" value="SAICAR_synthetase_CS"/>
</dbReference>
<dbReference type="NCBIfam" id="TIGR00081">
    <property type="entry name" value="purC"/>
    <property type="match status" value="1"/>
</dbReference>
<dbReference type="PANTHER" id="PTHR43599">
    <property type="entry name" value="MULTIFUNCTIONAL PROTEIN ADE2"/>
    <property type="match status" value="1"/>
</dbReference>
<dbReference type="PANTHER" id="PTHR43599:SF3">
    <property type="entry name" value="SI:DKEY-6E2.2"/>
    <property type="match status" value="1"/>
</dbReference>
<dbReference type="Pfam" id="PF01259">
    <property type="entry name" value="SAICAR_synt"/>
    <property type="match status" value="1"/>
</dbReference>
<dbReference type="SUPFAM" id="SSF56104">
    <property type="entry name" value="SAICAR synthase-like"/>
    <property type="match status" value="1"/>
</dbReference>
<dbReference type="PROSITE" id="PS01057">
    <property type="entry name" value="SAICAR_SYNTHETASE_1"/>
    <property type="match status" value="1"/>
</dbReference>
<dbReference type="PROSITE" id="PS01058">
    <property type="entry name" value="SAICAR_SYNTHETASE_2"/>
    <property type="match status" value="1"/>
</dbReference>
<feature type="chain" id="PRO_1000203232" description="Phosphoribosylaminoimidazole-succinocarboxamide synthase">
    <location>
        <begin position="1"/>
        <end position="237"/>
    </location>
</feature>
<sequence>MQKLSEVYRGKAKTVYATENPDFLVLEFRNDTSALDGKRIEQFYRKGIINNQFNHFIMLKLEEAGIPTQLERLLSENELLVKKLDMFPLESVIRNRAAGSLEKRLALQEGLLLDPPIYDLFLKNDSLHDPIVTESYCETFGWASTAHLVKMKELSYKVNDVLSPLFDAADLILVDFKLEFGLFKGEVILGDEFSPDGCRIWDKTTLNKLDKDRFRQNLGGLIEAYEEVAKRIGVPLN</sequence>
<comment type="catalytic activity">
    <reaction evidence="1">
        <text>5-amino-1-(5-phospho-D-ribosyl)imidazole-4-carboxylate + L-aspartate + ATP = (2S)-2-[5-amino-1-(5-phospho-beta-D-ribosyl)imidazole-4-carboxamido]succinate + ADP + phosphate + 2 H(+)</text>
        <dbReference type="Rhea" id="RHEA:22628"/>
        <dbReference type="ChEBI" id="CHEBI:15378"/>
        <dbReference type="ChEBI" id="CHEBI:29991"/>
        <dbReference type="ChEBI" id="CHEBI:30616"/>
        <dbReference type="ChEBI" id="CHEBI:43474"/>
        <dbReference type="ChEBI" id="CHEBI:58443"/>
        <dbReference type="ChEBI" id="CHEBI:77657"/>
        <dbReference type="ChEBI" id="CHEBI:456216"/>
        <dbReference type="EC" id="6.3.2.6"/>
    </reaction>
</comment>
<comment type="pathway">
    <text evidence="1">Purine metabolism; IMP biosynthesis via de novo pathway; 5-amino-1-(5-phospho-D-ribosyl)imidazole-4-carboxamide from 5-amino-1-(5-phospho-D-ribosyl)imidazole-4-carboxylate: step 1/2.</text>
</comment>
<comment type="similarity">
    <text evidence="1">Belongs to the SAICAR synthetase family.</text>
</comment>
<gene>
    <name evidence="1" type="primary">purC</name>
    <name type="ordered locus">HDEF_1837</name>
</gene>
<evidence type="ECO:0000255" key="1">
    <source>
        <dbReference type="HAMAP-Rule" id="MF_00137"/>
    </source>
</evidence>
<protein>
    <recommendedName>
        <fullName evidence="1">Phosphoribosylaminoimidazole-succinocarboxamide synthase</fullName>
        <ecNumber evidence="1">6.3.2.6</ecNumber>
    </recommendedName>
    <alternativeName>
        <fullName evidence="1">SAICAR synthetase</fullName>
    </alternativeName>
</protein>